<gene>
    <name evidence="1" type="primary">aspS</name>
    <name type="ordered locus">Tfu_2086</name>
</gene>
<evidence type="ECO:0000255" key="1">
    <source>
        <dbReference type="HAMAP-Rule" id="MF_00044"/>
    </source>
</evidence>
<evidence type="ECO:0000256" key="2">
    <source>
        <dbReference type="SAM" id="MobiDB-lite"/>
    </source>
</evidence>
<protein>
    <recommendedName>
        <fullName evidence="1">Aspartate--tRNA(Asp/Asn) ligase</fullName>
        <ecNumber evidence="1">6.1.1.23</ecNumber>
    </recommendedName>
    <alternativeName>
        <fullName evidence="1">Aspartyl-tRNA synthetase</fullName>
        <shortName evidence="1">AspRS</shortName>
    </alternativeName>
    <alternativeName>
        <fullName evidence="1">Non-discriminating aspartyl-tRNA synthetase</fullName>
        <shortName evidence="1">ND-AspRS</shortName>
    </alternativeName>
</protein>
<organism>
    <name type="scientific">Thermobifida fusca (strain YX)</name>
    <dbReference type="NCBI Taxonomy" id="269800"/>
    <lineage>
        <taxon>Bacteria</taxon>
        <taxon>Bacillati</taxon>
        <taxon>Actinomycetota</taxon>
        <taxon>Actinomycetes</taxon>
        <taxon>Streptosporangiales</taxon>
        <taxon>Nocardiopsidaceae</taxon>
        <taxon>Thermobifida</taxon>
    </lineage>
</organism>
<accession>Q47N50</accession>
<dbReference type="EC" id="6.1.1.23" evidence="1"/>
<dbReference type="EMBL" id="CP000088">
    <property type="protein sequence ID" value="AAZ56119.1"/>
    <property type="molecule type" value="Genomic_DNA"/>
</dbReference>
<dbReference type="RefSeq" id="WP_011292509.1">
    <property type="nucleotide sequence ID" value="NC_007333.1"/>
</dbReference>
<dbReference type="SMR" id="Q47N50"/>
<dbReference type="STRING" id="269800.Tfu_2086"/>
<dbReference type="KEGG" id="tfu:Tfu_2086"/>
<dbReference type="eggNOG" id="COG0173">
    <property type="taxonomic scope" value="Bacteria"/>
</dbReference>
<dbReference type="HOGENOM" id="CLU_014330_3_2_11"/>
<dbReference type="OrthoDB" id="9802326at2"/>
<dbReference type="GO" id="GO:0005737">
    <property type="term" value="C:cytoplasm"/>
    <property type="evidence" value="ECO:0007669"/>
    <property type="project" value="UniProtKB-SubCell"/>
</dbReference>
<dbReference type="GO" id="GO:0004815">
    <property type="term" value="F:aspartate-tRNA ligase activity"/>
    <property type="evidence" value="ECO:0007669"/>
    <property type="project" value="UniProtKB-UniRule"/>
</dbReference>
<dbReference type="GO" id="GO:0050560">
    <property type="term" value="F:aspartate-tRNA(Asn) ligase activity"/>
    <property type="evidence" value="ECO:0007669"/>
    <property type="project" value="UniProtKB-EC"/>
</dbReference>
<dbReference type="GO" id="GO:0005524">
    <property type="term" value="F:ATP binding"/>
    <property type="evidence" value="ECO:0007669"/>
    <property type="project" value="UniProtKB-UniRule"/>
</dbReference>
<dbReference type="GO" id="GO:0003676">
    <property type="term" value="F:nucleic acid binding"/>
    <property type="evidence" value="ECO:0007669"/>
    <property type="project" value="InterPro"/>
</dbReference>
<dbReference type="GO" id="GO:0006422">
    <property type="term" value="P:aspartyl-tRNA aminoacylation"/>
    <property type="evidence" value="ECO:0007669"/>
    <property type="project" value="UniProtKB-UniRule"/>
</dbReference>
<dbReference type="CDD" id="cd00777">
    <property type="entry name" value="AspRS_core"/>
    <property type="match status" value="1"/>
</dbReference>
<dbReference type="CDD" id="cd04317">
    <property type="entry name" value="EcAspRS_like_N"/>
    <property type="match status" value="1"/>
</dbReference>
<dbReference type="Gene3D" id="3.30.930.10">
    <property type="entry name" value="Bira Bifunctional Protein, Domain 2"/>
    <property type="match status" value="1"/>
</dbReference>
<dbReference type="Gene3D" id="3.30.1360.30">
    <property type="entry name" value="GAD-like domain"/>
    <property type="match status" value="1"/>
</dbReference>
<dbReference type="Gene3D" id="2.40.50.140">
    <property type="entry name" value="Nucleic acid-binding proteins"/>
    <property type="match status" value="1"/>
</dbReference>
<dbReference type="HAMAP" id="MF_00044">
    <property type="entry name" value="Asp_tRNA_synth_type1"/>
    <property type="match status" value="1"/>
</dbReference>
<dbReference type="InterPro" id="IPR004364">
    <property type="entry name" value="Aa-tRNA-synt_II"/>
</dbReference>
<dbReference type="InterPro" id="IPR006195">
    <property type="entry name" value="aa-tRNA-synth_II"/>
</dbReference>
<dbReference type="InterPro" id="IPR045864">
    <property type="entry name" value="aa-tRNA-synth_II/BPL/LPL"/>
</dbReference>
<dbReference type="InterPro" id="IPR004524">
    <property type="entry name" value="Asp-tRNA-ligase_1"/>
</dbReference>
<dbReference type="InterPro" id="IPR047089">
    <property type="entry name" value="Asp-tRNA-ligase_1_N"/>
</dbReference>
<dbReference type="InterPro" id="IPR002312">
    <property type="entry name" value="Asp/Asn-tRNA-synth_IIb"/>
</dbReference>
<dbReference type="InterPro" id="IPR047090">
    <property type="entry name" value="AspRS_core"/>
</dbReference>
<dbReference type="InterPro" id="IPR004115">
    <property type="entry name" value="GAD-like_sf"/>
</dbReference>
<dbReference type="InterPro" id="IPR029351">
    <property type="entry name" value="GAD_dom"/>
</dbReference>
<dbReference type="InterPro" id="IPR012340">
    <property type="entry name" value="NA-bd_OB-fold"/>
</dbReference>
<dbReference type="InterPro" id="IPR004365">
    <property type="entry name" value="NA-bd_OB_tRNA"/>
</dbReference>
<dbReference type="NCBIfam" id="TIGR00459">
    <property type="entry name" value="aspS_bact"/>
    <property type="match status" value="1"/>
</dbReference>
<dbReference type="NCBIfam" id="NF001750">
    <property type="entry name" value="PRK00476.1"/>
    <property type="match status" value="1"/>
</dbReference>
<dbReference type="PANTHER" id="PTHR22594:SF5">
    <property type="entry name" value="ASPARTATE--TRNA LIGASE, MITOCHONDRIAL"/>
    <property type="match status" value="1"/>
</dbReference>
<dbReference type="PANTHER" id="PTHR22594">
    <property type="entry name" value="ASPARTYL/LYSYL-TRNA SYNTHETASE"/>
    <property type="match status" value="1"/>
</dbReference>
<dbReference type="Pfam" id="PF02938">
    <property type="entry name" value="GAD"/>
    <property type="match status" value="1"/>
</dbReference>
<dbReference type="Pfam" id="PF00152">
    <property type="entry name" value="tRNA-synt_2"/>
    <property type="match status" value="1"/>
</dbReference>
<dbReference type="Pfam" id="PF01336">
    <property type="entry name" value="tRNA_anti-codon"/>
    <property type="match status" value="1"/>
</dbReference>
<dbReference type="PRINTS" id="PR01042">
    <property type="entry name" value="TRNASYNTHASP"/>
</dbReference>
<dbReference type="SUPFAM" id="SSF55681">
    <property type="entry name" value="Class II aaRS and biotin synthetases"/>
    <property type="match status" value="1"/>
</dbReference>
<dbReference type="SUPFAM" id="SSF55261">
    <property type="entry name" value="GAD domain-like"/>
    <property type="match status" value="1"/>
</dbReference>
<dbReference type="SUPFAM" id="SSF50249">
    <property type="entry name" value="Nucleic acid-binding proteins"/>
    <property type="match status" value="1"/>
</dbReference>
<dbReference type="PROSITE" id="PS50862">
    <property type="entry name" value="AA_TRNA_LIGASE_II"/>
    <property type="match status" value="1"/>
</dbReference>
<keyword id="KW-0030">Aminoacyl-tRNA synthetase</keyword>
<keyword id="KW-0067">ATP-binding</keyword>
<keyword id="KW-0963">Cytoplasm</keyword>
<keyword id="KW-0436">Ligase</keyword>
<keyword id="KW-0547">Nucleotide-binding</keyword>
<keyword id="KW-0648">Protein biosynthesis</keyword>
<reference key="1">
    <citation type="journal article" date="2007" name="J. Bacteriol.">
        <title>Genome sequence and analysis of the soil cellulolytic actinomycete Thermobifida fusca YX.</title>
        <authorList>
            <person name="Lykidis A."/>
            <person name="Mavromatis K."/>
            <person name="Ivanova N."/>
            <person name="Anderson I."/>
            <person name="Land M."/>
            <person name="DiBartolo G."/>
            <person name="Martinez M."/>
            <person name="Lapidus A."/>
            <person name="Lucas S."/>
            <person name="Copeland A."/>
            <person name="Richardson P."/>
            <person name="Wilson D.B."/>
            <person name="Kyrpides N."/>
        </authorList>
    </citation>
    <scope>NUCLEOTIDE SEQUENCE [LARGE SCALE GENOMIC DNA]</scope>
    <source>
        <strain>YX</strain>
    </source>
</reference>
<comment type="function">
    <text evidence="1">Aspartyl-tRNA synthetase with relaxed tRNA specificity since it is able to aspartylate not only its cognate tRNA(Asp) but also tRNA(Asn). Reaction proceeds in two steps: L-aspartate is first activated by ATP to form Asp-AMP and then transferred to the acceptor end of tRNA(Asp/Asn).</text>
</comment>
<comment type="catalytic activity">
    <reaction evidence="1">
        <text>tRNA(Asx) + L-aspartate + ATP = L-aspartyl-tRNA(Asx) + AMP + diphosphate</text>
        <dbReference type="Rhea" id="RHEA:18349"/>
        <dbReference type="Rhea" id="RHEA-COMP:9710"/>
        <dbReference type="Rhea" id="RHEA-COMP:9711"/>
        <dbReference type="ChEBI" id="CHEBI:29991"/>
        <dbReference type="ChEBI" id="CHEBI:30616"/>
        <dbReference type="ChEBI" id="CHEBI:33019"/>
        <dbReference type="ChEBI" id="CHEBI:78442"/>
        <dbReference type="ChEBI" id="CHEBI:78516"/>
        <dbReference type="ChEBI" id="CHEBI:456215"/>
        <dbReference type="EC" id="6.1.1.23"/>
    </reaction>
</comment>
<comment type="subunit">
    <text evidence="1">Homodimer.</text>
</comment>
<comment type="subcellular location">
    <subcellularLocation>
        <location evidence="1">Cytoplasm</location>
    </subcellularLocation>
</comment>
<comment type="similarity">
    <text evidence="1">Belongs to the class-II aminoacyl-tRNA synthetase family. Type 1 subfamily.</text>
</comment>
<feature type="chain" id="PRO_0000235573" description="Aspartate--tRNA(Asp/Asn) ligase">
    <location>
        <begin position="1"/>
        <end position="579"/>
    </location>
</feature>
<feature type="region of interest" description="Aspartate" evidence="1">
    <location>
        <begin position="193"/>
        <end position="196"/>
    </location>
</feature>
<feature type="region of interest" description="Disordered" evidence="2">
    <location>
        <begin position="551"/>
        <end position="579"/>
    </location>
</feature>
<feature type="binding site" evidence="1">
    <location>
        <position position="169"/>
    </location>
    <ligand>
        <name>L-aspartate</name>
        <dbReference type="ChEBI" id="CHEBI:29991"/>
    </ligand>
</feature>
<feature type="binding site" evidence="1">
    <location>
        <begin position="215"/>
        <end position="217"/>
    </location>
    <ligand>
        <name>ATP</name>
        <dbReference type="ChEBI" id="CHEBI:30616"/>
    </ligand>
</feature>
<feature type="binding site" evidence="1">
    <location>
        <position position="215"/>
    </location>
    <ligand>
        <name>L-aspartate</name>
        <dbReference type="ChEBI" id="CHEBI:29991"/>
    </ligand>
</feature>
<feature type="binding site" evidence="1">
    <location>
        <position position="224"/>
    </location>
    <ligand>
        <name>ATP</name>
        <dbReference type="ChEBI" id="CHEBI:30616"/>
    </ligand>
</feature>
<feature type="binding site" evidence="1">
    <location>
        <position position="437"/>
    </location>
    <ligand>
        <name>L-aspartate</name>
        <dbReference type="ChEBI" id="CHEBI:29991"/>
    </ligand>
</feature>
<feature type="binding site" evidence="1">
    <location>
        <position position="471"/>
    </location>
    <ligand>
        <name>ATP</name>
        <dbReference type="ChEBI" id="CHEBI:30616"/>
    </ligand>
</feature>
<feature type="binding site" evidence="1">
    <location>
        <position position="478"/>
    </location>
    <ligand>
        <name>L-aspartate</name>
        <dbReference type="ChEBI" id="CHEBI:29991"/>
    </ligand>
</feature>
<feature type="binding site" evidence="1">
    <location>
        <begin position="523"/>
        <end position="526"/>
    </location>
    <ligand>
        <name>ATP</name>
        <dbReference type="ChEBI" id="CHEBI:30616"/>
    </ligand>
</feature>
<feature type="site" description="Important for tRNA non-discrimination" evidence="1">
    <location>
        <position position="31"/>
    </location>
</feature>
<feature type="site" description="Important for tRNA non-discrimination" evidence="1">
    <location>
        <position position="77"/>
    </location>
</feature>
<name>SYDND_THEFY</name>
<sequence>MIRTHEAGTLRADHAEQNVVLAGWVARRRDHGGVVFLDLRDASGIVQVVVREDELAHDLRSEYCIKVTGTVRIRPEGNENPDIATGEIEVVASHIEVLSESAPLPFPLDGNQEISEEARLRYRYLDMRRPETAEALRVRSRATYIAHEVMNDNGFVYVETPYLTRSTPEGARDFLVPVRLQPGHWYALPQSPQLFKQLLMVGGMERYYQLTRCFRDEDFRADRQPEFTQIDIEMSFVDEEDLFDIGEKLFTRLLREVRGVELPRPFRRMKFAEAMDRFGTDKPDLRFGQELVELTDFFANTPFRVFQAPYVGAVVMPGGASQTRRELDAWQEWARSRGAKGLAYVLVHEDGTLGGPVAKNLSEEERAGLAERVGAKPGDAIFFSAGERTASQELLGAARLEIGKRCGLIDESAWEVLWITDMPMFEKDDEGGWTSVHHPFTAPAQEVADTFHNDPGSATARAFDLVMNGYELASGSIRIHRAEMQQRVFDTIGLSKDEAETKFGFLLEAFQFGPPPHGGLAVGWDRLVMLLAGQSTIRDVIAFPKTASGADPLTGAPTPITAEQRREAGVDAVPEQATS</sequence>
<proteinExistence type="inferred from homology"/>